<evidence type="ECO:0000255" key="1">
    <source>
        <dbReference type="HAMAP-Rule" id="MF_00332"/>
    </source>
</evidence>
<evidence type="ECO:0000256" key="2">
    <source>
        <dbReference type="SAM" id="MobiDB-lite"/>
    </source>
</evidence>
<feature type="chain" id="PRO_0000226018" description="Chaperone protein DnaK">
    <location>
        <begin position="1"/>
        <end position="612"/>
    </location>
</feature>
<feature type="region of interest" description="Disordered" evidence="2">
    <location>
        <begin position="579"/>
        <end position="612"/>
    </location>
</feature>
<feature type="compositionally biased region" description="Gly residues" evidence="2">
    <location>
        <begin position="581"/>
        <end position="597"/>
    </location>
</feature>
<feature type="compositionally biased region" description="Basic and acidic residues" evidence="2">
    <location>
        <begin position="603"/>
        <end position="612"/>
    </location>
</feature>
<feature type="modified residue" description="Phosphothreonine; by autocatalysis" evidence="1">
    <location>
        <position position="174"/>
    </location>
</feature>
<protein>
    <recommendedName>
        <fullName evidence="1">Chaperone protein DnaK</fullName>
    </recommendedName>
    <alternativeName>
        <fullName evidence="1">HSP70</fullName>
    </alternativeName>
    <alternativeName>
        <fullName evidence="1">Heat shock 70 kDa protein</fullName>
    </alternativeName>
    <alternativeName>
        <fullName evidence="1">Heat shock protein 70</fullName>
    </alternativeName>
</protein>
<name>DNAK_SYMTH</name>
<sequence>MAKVIGIDLGTTNSVVAVMDGSEPTVLENREGDRTTPSVVAFTKTGERLVGKVAKRQAITNPDRTIISIKRHMGSDYKVRIDDKAYTPQEISAMILSKLKADAEEKLGEKITQAVITVPAYFTDAQRQATKDAGTIAGLEVLRIINEPTAAALAYGLDKGEDQRILVFDLGGGTFDVSILELGGGTFQVIATAGNNKLGGDDFDERIVNYLADRFQREHGIDLRKDKQALQRLREAAEKAKIELSSVTTTNINLPFISMTADGPVHMDETLTRAKFEELTADLVEATMGPTRQALQDAGLEPGEIDKVLLVGGSTRIPAVQEAVRRFFGKEPYKGINPDEVVAMGAAIQAAVIKGDVKDVLLLDVTPLSLGIETLGGVFTKLIERNTTIPTRKSQIFSTAADGQTQVEIHVLQGEREMAAYNKTLGRFILDGIPPAPRGVPKIEVTFDIDVNGIVHVSAKDLGTGKEQKITIQSQTSMSKEEIERAIKEAEAMAAEDKKRREEAEIRNNADAAVYNAEKLIKESEGKGIDPSLIDAVKGAIEPVKEALKGTDVNAVKQATEKLTEAVYKLSSAIYEKTGSAGTGAGSQAGSAAGSGDGQSMDAEFKVKDEDK</sequence>
<keyword id="KW-0067">ATP-binding</keyword>
<keyword id="KW-0143">Chaperone</keyword>
<keyword id="KW-0547">Nucleotide-binding</keyword>
<keyword id="KW-0597">Phosphoprotein</keyword>
<keyword id="KW-1185">Reference proteome</keyword>
<keyword id="KW-0346">Stress response</keyword>
<accession>Q67S54</accession>
<proteinExistence type="inferred from homology"/>
<gene>
    <name evidence="1" type="primary">dnaK</name>
    <name type="ordered locus">STH504</name>
</gene>
<comment type="function">
    <text evidence="1">Acts as a chaperone.</text>
</comment>
<comment type="induction">
    <text evidence="1">By stress conditions e.g. heat shock.</text>
</comment>
<comment type="similarity">
    <text evidence="1">Belongs to the heat shock protein 70 family.</text>
</comment>
<organism>
    <name type="scientific">Symbiobacterium thermophilum (strain DSM 24528 / JCM 14929 / IAM 14863 / T)</name>
    <dbReference type="NCBI Taxonomy" id="292459"/>
    <lineage>
        <taxon>Bacteria</taxon>
        <taxon>Bacillati</taxon>
        <taxon>Bacillota</taxon>
        <taxon>Clostridia</taxon>
        <taxon>Eubacteriales</taxon>
        <taxon>Symbiobacteriaceae</taxon>
        <taxon>Symbiobacterium</taxon>
    </lineage>
</organism>
<dbReference type="EMBL" id="AP006840">
    <property type="protein sequence ID" value="BAD39489.1"/>
    <property type="molecule type" value="Genomic_DNA"/>
</dbReference>
<dbReference type="RefSeq" id="WP_011194638.1">
    <property type="nucleotide sequence ID" value="NC_006177.1"/>
</dbReference>
<dbReference type="SMR" id="Q67S54"/>
<dbReference type="STRING" id="292459.STH504"/>
<dbReference type="KEGG" id="sth:STH504"/>
<dbReference type="eggNOG" id="COG0443">
    <property type="taxonomic scope" value="Bacteria"/>
</dbReference>
<dbReference type="HOGENOM" id="CLU_005965_2_4_9"/>
<dbReference type="OrthoDB" id="9766019at2"/>
<dbReference type="Proteomes" id="UP000000417">
    <property type="component" value="Chromosome"/>
</dbReference>
<dbReference type="GO" id="GO:0005524">
    <property type="term" value="F:ATP binding"/>
    <property type="evidence" value="ECO:0007669"/>
    <property type="project" value="UniProtKB-UniRule"/>
</dbReference>
<dbReference type="GO" id="GO:0140662">
    <property type="term" value="F:ATP-dependent protein folding chaperone"/>
    <property type="evidence" value="ECO:0007669"/>
    <property type="project" value="InterPro"/>
</dbReference>
<dbReference type="GO" id="GO:0051082">
    <property type="term" value="F:unfolded protein binding"/>
    <property type="evidence" value="ECO:0007669"/>
    <property type="project" value="InterPro"/>
</dbReference>
<dbReference type="CDD" id="cd10234">
    <property type="entry name" value="ASKHA_NBD_HSP70_DnaK-like"/>
    <property type="match status" value="1"/>
</dbReference>
<dbReference type="FunFam" id="2.60.34.10:FF:000014">
    <property type="entry name" value="Chaperone protein DnaK HSP70"/>
    <property type="match status" value="1"/>
</dbReference>
<dbReference type="FunFam" id="1.20.1270.10:FF:000001">
    <property type="entry name" value="Molecular chaperone DnaK"/>
    <property type="match status" value="1"/>
</dbReference>
<dbReference type="FunFam" id="3.30.420.40:FF:000071">
    <property type="entry name" value="Molecular chaperone DnaK"/>
    <property type="match status" value="1"/>
</dbReference>
<dbReference type="FunFam" id="3.90.640.10:FF:000003">
    <property type="entry name" value="Molecular chaperone DnaK"/>
    <property type="match status" value="1"/>
</dbReference>
<dbReference type="Gene3D" id="1.20.1270.10">
    <property type="match status" value="1"/>
</dbReference>
<dbReference type="Gene3D" id="3.30.420.40">
    <property type="match status" value="2"/>
</dbReference>
<dbReference type="Gene3D" id="3.90.640.10">
    <property type="entry name" value="Actin, Chain A, domain 4"/>
    <property type="match status" value="1"/>
</dbReference>
<dbReference type="Gene3D" id="2.60.34.10">
    <property type="entry name" value="Substrate Binding Domain Of DNAk, Chain A, domain 1"/>
    <property type="match status" value="1"/>
</dbReference>
<dbReference type="HAMAP" id="MF_00332">
    <property type="entry name" value="DnaK"/>
    <property type="match status" value="1"/>
</dbReference>
<dbReference type="InterPro" id="IPR043129">
    <property type="entry name" value="ATPase_NBD"/>
</dbReference>
<dbReference type="InterPro" id="IPR012725">
    <property type="entry name" value="Chaperone_DnaK"/>
</dbReference>
<dbReference type="InterPro" id="IPR018181">
    <property type="entry name" value="Heat_shock_70_CS"/>
</dbReference>
<dbReference type="InterPro" id="IPR029048">
    <property type="entry name" value="HSP70_C_sf"/>
</dbReference>
<dbReference type="InterPro" id="IPR029047">
    <property type="entry name" value="HSP70_peptide-bd_sf"/>
</dbReference>
<dbReference type="InterPro" id="IPR013126">
    <property type="entry name" value="Hsp_70_fam"/>
</dbReference>
<dbReference type="NCBIfam" id="NF001413">
    <property type="entry name" value="PRK00290.1"/>
    <property type="match status" value="1"/>
</dbReference>
<dbReference type="NCBIfam" id="TIGR02350">
    <property type="entry name" value="prok_dnaK"/>
    <property type="match status" value="1"/>
</dbReference>
<dbReference type="PANTHER" id="PTHR19375">
    <property type="entry name" value="HEAT SHOCK PROTEIN 70KDA"/>
    <property type="match status" value="1"/>
</dbReference>
<dbReference type="Pfam" id="PF00012">
    <property type="entry name" value="HSP70"/>
    <property type="match status" value="1"/>
</dbReference>
<dbReference type="PRINTS" id="PR00301">
    <property type="entry name" value="HEATSHOCK70"/>
</dbReference>
<dbReference type="SUPFAM" id="SSF53067">
    <property type="entry name" value="Actin-like ATPase domain"/>
    <property type="match status" value="2"/>
</dbReference>
<dbReference type="SUPFAM" id="SSF100934">
    <property type="entry name" value="Heat shock protein 70kD (HSP70), C-terminal subdomain"/>
    <property type="match status" value="1"/>
</dbReference>
<dbReference type="SUPFAM" id="SSF100920">
    <property type="entry name" value="Heat shock protein 70kD (HSP70), peptide-binding domain"/>
    <property type="match status" value="1"/>
</dbReference>
<dbReference type="PROSITE" id="PS00297">
    <property type="entry name" value="HSP70_1"/>
    <property type="match status" value="1"/>
</dbReference>
<dbReference type="PROSITE" id="PS00329">
    <property type="entry name" value="HSP70_2"/>
    <property type="match status" value="1"/>
</dbReference>
<dbReference type="PROSITE" id="PS01036">
    <property type="entry name" value="HSP70_3"/>
    <property type="match status" value="1"/>
</dbReference>
<reference key="1">
    <citation type="journal article" date="2004" name="Nucleic Acids Res.">
        <title>Genome sequence of Symbiobacterium thermophilum, an uncultivable bacterium that depends on microbial commensalism.</title>
        <authorList>
            <person name="Ueda K."/>
            <person name="Yamashita A."/>
            <person name="Ishikawa J."/>
            <person name="Shimada M."/>
            <person name="Watsuji T."/>
            <person name="Morimura K."/>
            <person name="Ikeda H."/>
            <person name="Hattori M."/>
            <person name="Beppu T."/>
        </authorList>
    </citation>
    <scope>NUCLEOTIDE SEQUENCE [LARGE SCALE GENOMIC DNA]</scope>
    <source>
        <strain>DSM 24528 / JCM 14929 / IAM 14863 / T</strain>
    </source>
</reference>